<evidence type="ECO:0000255" key="1">
    <source>
        <dbReference type="HAMAP-Rule" id="MF_00456"/>
    </source>
</evidence>
<dbReference type="EC" id="2.7.2.11" evidence="1"/>
<dbReference type="EMBL" id="AE003849">
    <property type="protein sequence ID" value="AAF83814.1"/>
    <property type="molecule type" value="Genomic_DNA"/>
</dbReference>
<dbReference type="PIR" id="C82735">
    <property type="entry name" value="C82735"/>
</dbReference>
<dbReference type="RefSeq" id="WP_010893523.1">
    <property type="nucleotide sequence ID" value="NC_002488.3"/>
</dbReference>
<dbReference type="SMR" id="Q9PEM4"/>
<dbReference type="STRING" id="160492.XF_1004"/>
<dbReference type="KEGG" id="xfa:XF_1004"/>
<dbReference type="PATRIC" id="fig|160492.11.peg.1074"/>
<dbReference type="eggNOG" id="COG0263">
    <property type="taxonomic scope" value="Bacteria"/>
</dbReference>
<dbReference type="HOGENOM" id="CLU_025400_2_0_6"/>
<dbReference type="UniPathway" id="UPA00098">
    <property type="reaction ID" value="UER00359"/>
</dbReference>
<dbReference type="Proteomes" id="UP000000812">
    <property type="component" value="Chromosome"/>
</dbReference>
<dbReference type="GO" id="GO:0005829">
    <property type="term" value="C:cytosol"/>
    <property type="evidence" value="ECO:0007669"/>
    <property type="project" value="TreeGrafter"/>
</dbReference>
<dbReference type="GO" id="GO:0005524">
    <property type="term" value="F:ATP binding"/>
    <property type="evidence" value="ECO:0007669"/>
    <property type="project" value="UniProtKB-KW"/>
</dbReference>
<dbReference type="GO" id="GO:0004349">
    <property type="term" value="F:glutamate 5-kinase activity"/>
    <property type="evidence" value="ECO:0007669"/>
    <property type="project" value="UniProtKB-UniRule"/>
</dbReference>
<dbReference type="GO" id="GO:0003723">
    <property type="term" value="F:RNA binding"/>
    <property type="evidence" value="ECO:0007669"/>
    <property type="project" value="InterPro"/>
</dbReference>
<dbReference type="GO" id="GO:0055129">
    <property type="term" value="P:L-proline biosynthetic process"/>
    <property type="evidence" value="ECO:0007669"/>
    <property type="project" value="UniProtKB-UniRule"/>
</dbReference>
<dbReference type="CDD" id="cd04242">
    <property type="entry name" value="AAK_G5K_ProB"/>
    <property type="match status" value="1"/>
</dbReference>
<dbReference type="CDD" id="cd21157">
    <property type="entry name" value="PUA_G5K"/>
    <property type="match status" value="1"/>
</dbReference>
<dbReference type="FunFam" id="3.40.1160.10:FF:000018">
    <property type="entry name" value="Glutamate 5-kinase"/>
    <property type="match status" value="1"/>
</dbReference>
<dbReference type="Gene3D" id="3.40.1160.10">
    <property type="entry name" value="Acetylglutamate kinase-like"/>
    <property type="match status" value="1"/>
</dbReference>
<dbReference type="Gene3D" id="2.30.130.10">
    <property type="entry name" value="PUA domain"/>
    <property type="match status" value="1"/>
</dbReference>
<dbReference type="HAMAP" id="MF_00456">
    <property type="entry name" value="ProB"/>
    <property type="match status" value="1"/>
</dbReference>
<dbReference type="InterPro" id="IPR036393">
    <property type="entry name" value="AceGlu_kinase-like_sf"/>
</dbReference>
<dbReference type="InterPro" id="IPR001048">
    <property type="entry name" value="Asp/Glu/Uridylate_kinase"/>
</dbReference>
<dbReference type="InterPro" id="IPR041739">
    <property type="entry name" value="G5K_ProB"/>
</dbReference>
<dbReference type="InterPro" id="IPR001057">
    <property type="entry name" value="Glu/AcGlu_kinase"/>
</dbReference>
<dbReference type="InterPro" id="IPR011529">
    <property type="entry name" value="Glu_5kinase"/>
</dbReference>
<dbReference type="InterPro" id="IPR005715">
    <property type="entry name" value="Glu_5kinase/COase_Synthase"/>
</dbReference>
<dbReference type="InterPro" id="IPR019797">
    <property type="entry name" value="Glutamate_5-kinase_CS"/>
</dbReference>
<dbReference type="InterPro" id="IPR002478">
    <property type="entry name" value="PUA"/>
</dbReference>
<dbReference type="InterPro" id="IPR015947">
    <property type="entry name" value="PUA-like_sf"/>
</dbReference>
<dbReference type="InterPro" id="IPR036974">
    <property type="entry name" value="PUA_sf"/>
</dbReference>
<dbReference type="NCBIfam" id="TIGR01027">
    <property type="entry name" value="proB"/>
    <property type="match status" value="1"/>
</dbReference>
<dbReference type="PANTHER" id="PTHR43654">
    <property type="entry name" value="GLUTAMATE 5-KINASE"/>
    <property type="match status" value="1"/>
</dbReference>
<dbReference type="PANTHER" id="PTHR43654:SF1">
    <property type="entry name" value="ISOPENTENYL PHOSPHATE KINASE"/>
    <property type="match status" value="1"/>
</dbReference>
<dbReference type="Pfam" id="PF00696">
    <property type="entry name" value="AA_kinase"/>
    <property type="match status" value="1"/>
</dbReference>
<dbReference type="Pfam" id="PF01472">
    <property type="entry name" value="PUA"/>
    <property type="match status" value="1"/>
</dbReference>
<dbReference type="PIRSF" id="PIRSF000729">
    <property type="entry name" value="GK"/>
    <property type="match status" value="1"/>
</dbReference>
<dbReference type="PRINTS" id="PR00474">
    <property type="entry name" value="GLU5KINASE"/>
</dbReference>
<dbReference type="SMART" id="SM00359">
    <property type="entry name" value="PUA"/>
    <property type="match status" value="1"/>
</dbReference>
<dbReference type="SUPFAM" id="SSF53633">
    <property type="entry name" value="Carbamate kinase-like"/>
    <property type="match status" value="1"/>
</dbReference>
<dbReference type="SUPFAM" id="SSF88697">
    <property type="entry name" value="PUA domain-like"/>
    <property type="match status" value="1"/>
</dbReference>
<dbReference type="PROSITE" id="PS00902">
    <property type="entry name" value="GLUTAMATE_5_KINASE"/>
    <property type="match status" value="1"/>
</dbReference>
<dbReference type="PROSITE" id="PS50890">
    <property type="entry name" value="PUA"/>
    <property type="match status" value="1"/>
</dbReference>
<organism>
    <name type="scientific">Xylella fastidiosa (strain 9a5c)</name>
    <dbReference type="NCBI Taxonomy" id="160492"/>
    <lineage>
        <taxon>Bacteria</taxon>
        <taxon>Pseudomonadati</taxon>
        <taxon>Pseudomonadota</taxon>
        <taxon>Gammaproteobacteria</taxon>
        <taxon>Lysobacterales</taxon>
        <taxon>Lysobacteraceae</taxon>
        <taxon>Xylella</taxon>
    </lineage>
</organism>
<feature type="chain" id="PRO_0000109760" description="Glutamate 5-kinase">
    <location>
        <begin position="1"/>
        <end position="384"/>
    </location>
</feature>
<feature type="domain" description="PUA" evidence="1">
    <location>
        <begin position="288"/>
        <end position="370"/>
    </location>
</feature>
<feature type="binding site" evidence="1">
    <location>
        <position position="24"/>
    </location>
    <ligand>
        <name>ATP</name>
        <dbReference type="ChEBI" id="CHEBI:30616"/>
    </ligand>
</feature>
<feature type="binding site" evidence="1">
    <location>
        <position position="64"/>
    </location>
    <ligand>
        <name>substrate</name>
    </ligand>
</feature>
<feature type="binding site" evidence="1">
    <location>
        <position position="149"/>
    </location>
    <ligand>
        <name>substrate</name>
    </ligand>
</feature>
<feature type="binding site" evidence="1">
    <location>
        <position position="161"/>
    </location>
    <ligand>
        <name>substrate</name>
    </ligand>
</feature>
<feature type="binding site" evidence="1">
    <location>
        <begin position="181"/>
        <end position="182"/>
    </location>
    <ligand>
        <name>ATP</name>
        <dbReference type="ChEBI" id="CHEBI:30616"/>
    </ligand>
</feature>
<feature type="binding site" evidence="1">
    <location>
        <begin position="223"/>
        <end position="229"/>
    </location>
    <ligand>
        <name>ATP</name>
        <dbReference type="ChEBI" id="CHEBI:30616"/>
    </ligand>
</feature>
<gene>
    <name evidence="1" type="primary">proB</name>
    <name type="ordered locus">XF_1004</name>
</gene>
<keyword id="KW-0028">Amino-acid biosynthesis</keyword>
<keyword id="KW-0067">ATP-binding</keyword>
<keyword id="KW-0963">Cytoplasm</keyword>
<keyword id="KW-0418">Kinase</keyword>
<keyword id="KW-0547">Nucleotide-binding</keyword>
<keyword id="KW-0641">Proline biosynthesis</keyword>
<keyword id="KW-0808">Transferase</keyword>
<proteinExistence type="inferred from homology"/>
<accession>Q9PEM4</accession>
<reference key="1">
    <citation type="journal article" date="2000" name="Nature">
        <title>The genome sequence of the plant pathogen Xylella fastidiosa.</title>
        <authorList>
            <person name="Simpson A.J.G."/>
            <person name="Reinach F.C."/>
            <person name="Arruda P."/>
            <person name="Abreu F.A."/>
            <person name="Acencio M."/>
            <person name="Alvarenga R."/>
            <person name="Alves L.M.C."/>
            <person name="Araya J.E."/>
            <person name="Baia G.S."/>
            <person name="Baptista C.S."/>
            <person name="Barros M.H."/>
            <person name="Bonaccorsi E.D."/>
            <person name="Bordin S."/>
            <person name="Bove J.M."/>
            <person name="Briones M.R.S."/>
            <person name="Bueno M.R.P."/>
            <person name="Camargo A.A."/>
            <person name="Camargo L.E.A."/>
            <person name="Carraro D.M."/>
            <person name="Carrer H."/>
            <person name="Colauto N.B."/>
            <person name="Colombo C."/>
            <person name="Costa F.F."/>
            <person name="Costa M.C.R."/>
            <person name="Costa-Neto C.M."/>
            <person name="Coutinho L.L."/>
            <person name="Cristofani M."/>
            <person name="Dias-Neto E."/>
            <person name="Docena C."/>
            <person name="El-Dorry H."/>
            <person name="Facincani A.P."/>
            <person name="Ferreira A.J.S."/>
            <person name="Ferreira V.C.A."/>
            <person name="Ferro J.A."/>
            <person name="Fraga J.S."/>
            <person name="Franca S.C."/>
            <person name="Franco M.C."/>
            <person name="Frohme M."/>
            <person name="Furlan L.R."/>
            <person name="Garnier M."/>
            <person name="Goldman G.H."/>
            <person name="Goldman M.H.S."/>
            <person name="Gomes S.L."/>
            <person name="Gruber A."/>
            <person name="Ho P.L."/>
            <person name="Hoheisel J.D."/>
            <person name="Junqueira M.L."/>
            <person name="Kemper E.L."/>
            <person name="Kitajima J.P."/>
            <person name="Krieger J.E."/>
            <person name="Kuramae E.E."/>
            <person name="Laigret F."/>
            <person name="Lambais M.R."/>
            <person name="Leite L.C.C."/>
            <person name="Lemos E.G.M."/>
            <person name="Lemos M.V.F."/>
            <person name="Lopes S.A."/>
            <person name="Lopes C.R."/>
            <person name="Machado J.A."/>
            <person name="Machado M.A."/>
            <person name="Madeira A.M.B.N."/>
            <person name="Madeira H.M.F."/>
            <person name="Marino C.L."/>
            <person name="Marques M.V."/>
            <person name="Martins E.A.L."/>
            <person name="Martins E.M.F."/>
            <person name="Matsukuma A.Y."/>
            <person name="Menck C.F.M."/>
            <person name="Miracca E.C."/>
            <person name="Miyaki C.Y."/>
            <person name="Monteiro-Vitorello C.B."/>
            <person name="Moon D.H."/>
            <person name="Nagai M.A."/>
            <person name="Nascimento A.L.T.O."/>
            <person name="Netto L.E.S."/>
            <person name="Nhani A. Jr."/>
            <person name="Nobrega F.G."/>
            <person name="Nunes L.R."/>
            <person name="Oliveira M.A."/>
            <person name="de Oliveira M.C."/>
            <person name="de Oliveira R.C."/>
            <person name="Palmieri D.A."/>
            <person name="Paris A."/>
            <person name="Peixoto B.R."/>
            <person name="Pereira G.A.G."/>
            <person name="Pereira H.A. Jr."/>
            <person name="Pesquero J.B."/>
            <person name="Quaggio R.B."/>
            <person name="Roberto P.G."/>
            <person name="Rodrigues V."/>
            <person name="de Rosa A.J.M."/>
            <person name="de Rosa V.E. Jr."/>
            <person name="de Sa R.G."/>
            <person name="Santelli R.V."/>
            <person name="Sawasaki H.E."/>
            <person name="da Silva A.C.R."/>
            <person name="da Silva A.M."/>
            <person name="da Silva F.R."/>
            <person name="Silva W.A. Jr."/>
            <person name="da Silveira J.F."/>
            <person name="Silvestri M.L.Z."/>
            <person name="Siqueira W.J."/>
            <person name="de Souza A.A."/>
            <person name="de Souza A.P."/>
            <person name="Terenzi M.F."/>
            <person name="Truffi D."/>
            <person name="Tsai S.M."/>
            <person name="Tsuhako M.H."/>
            <person name="Vallada H."/>
            <person name="Van Sluys M.A."/>
            <person name="Verjovski-Almeida S."/>
            <person name="Vettore A.L."/>
            <person name="Zago M.A."/>
            <person name="Zatz M."/>
            <person name="Meidanis J."/>
            <person name="Setubal J.C."/>
        </authorList>
    </citation>
    <scope>NUCLEOTIDE SEQUENCE [LARGE SCALE GENOMIC DNA]</scope>
    <source>
        <strain>9a5c</strain>
    </source>
</reference>
<comment type="function">
    <text evidence="1">Catalyzes the transfer of a phosphate group to glutamate to form L-glutamate 5-phosphate.</text>
</comment>
<comment type="catalytic activity">
    <reaction evidence="1">
        <text>L-glutamate + ATP = L-glutamyl 5-phosphate + ADP</text>
        <dbReference type="Rhea" id="RHEA:14877"/>
        <dbReference type="ChEBI" id="CHEBI:29985"/>
        <dbReference type="ChEBI" id="CHEBI:30616"/>
        <dbReference type="ChEBI" id="CHEBI:58274"/>
        <dbReference type="ChEBI" id="CHEBI:456216"/>
        <dbReference type="EC" id="2.7.2.11"/>
    </reaction>
</comment>
<comment type="pathway">
    <text evidence="1">Amino-acid biosynthesis; L-proline biosynthesis; L-glutamate 5-semialdehyde from L-glutamate: step 1/2.</text>
</comment>
<comment type="subcellular location">
    <subcellularLocation>
        <location evidence="1">Cytoplasm</location>
    </subcellularLocation>
</comment>
<comment type="similarity">
    <text evidence="1">Belongs to the glutamate 5-kinase family.</text>
</comment>
<protein>
    <recommendedName>
        <fullName evidence="1">Glutamate 5-kinase</fullName>
        <ecNumber evidence="1">2.7.2.11</ecNumber>
    </recommendedName>
    <alternativeName>
        <fullName evidence="1">Gamma-glutamyl kinase</fullName>
        <shortName evidence="1">GK</shortName>
    </alternativeName>
</protein>
<sequence>MTGTPPPSRFPEQPIPPWRRAVLKVGSSLLAAAGGGLSPRFALDLAHFVSANITAGRQLVIVSSGAVAAGRALIPPLPESGGALAARQALAALGQAQLIALWQRFFDRPVAQVLLTHDDLRNRRRYLNARATLRELLHLGTLPVVNENDTVSVDELKLGDNDNLAAIVAALIDAQALFIATDIDGLYTTDPRHHPDAQPLHEVRTLTPEHLAMAGDSSSTVGTGGMRTKLEAALKAGAAGIDTYLFNGRSSDVVRGLAQHRLRGTRIHPTCTPIAARKYWLRHAPVEPGAILIDAGAAAALAQQGASLLPGGVLSAEGDFRRGDMIQIATRSPDHPPHPLARGLVQYSAADVRRIAGCHSRDIQPLLGYTYGDTIVHRDDLVLL</sequence>
<name>PROB_XYLFA</name>